<accession>C3LJ77</accession>
<organism>
    <name type="scientific">Bacillus anthracis (strain CDC 684 / NRRL 3495)</name>
    <dbReference type="NCBI Taxonomy" id="568206"/>
    <lineage>
        <taxon>Bacteria</taxon>
        <taxon>Bacillati</taxon>
        <taxon>Bacillota</taxon>
        <taxon>Bacilli</taxon>
        <taxon>Bacillales</taxon>
        <taxon>Bacillaceae</taxon>
        <taxon>Bacillus</taxon>
        <taxon>Bacillus cereus group</taxon>
    </lineage>
</organism>
<sequence>MPTINQLVRNGRTDKVWKSKSPALNKGFNSLKKKSTDISAPQKRGVCTRVGTMTPKKPNSALRKYARVRLTNGIEVTAYIPGIGHNLQEHSVVLIRGGRVKDLPGVRYHIVRGALDTAGVDKRMQGRSKYGTKKPKAAKK</sequence>
<evidence type="ECO:0000250" key="1"/>
<evidence type="ECO:0000255" key="2">
    <source>
        <dbReference type="HAMAP-Rule" id="MF_00403"/>
    </source>
</evidence>
<evidence type="ECO:0000305" key="3"/>
<name>RS12_BACAC</name>
<feature type="chain" id="PRO_1000194121" description="Small ribosomal subunit protein uS12">
    <location>
        <begin position="1"/>
        <end position="140"/>
    </location>
</feature>
<feature type="modified residue" description="3-methylthioaspartic acid" evidence="1">
    <location>
        <position position="102"/>
    </location>
</feature>
<comment type="function">
    <text evidence="2">With S4 and S5 plays an important role in translational accuracy.</text>
</comment>
<comment type="function">
    <text evidence="2">Interacts with and stabilizes bases of the 16S rRNA that are involved in tRNA selection in the A site and with the mRNA backbone. Located at the interface of the 30S and 50S subunits, it traverses the body of the 30S subunit contacting proteins on the other side and probably holding the rRNA structure together. The combined cluster of proteins S8, S12 and S17 appears to hold together the shoulder and platform of the 30S subunit.</text>
</comment>
<comment type="subunit">
    <text evidence="2">Part of the 30S ribosomal subunit. Contacts proteins S8 and S17. May interact with IF1 in the 30S initiation complex.</text>
</comment>
<comment type="similarity">
    <text evidence="2">Belongs to the universal ribosomal protein uS12 family.</text>
</comment>
<proteinExistence type="inferred from homology"/>
<dbReference type="EMBL" id="CP001215">
    <property type="protein sequence ID" value="ACP13989.1"/>
    <property type="molecule type" value="Genomic_DNA"/>
</dbReference>
<dbReference type="RefSeq" id="WP_001142340.1">
    <property type="nucleotide sequence ID" value="NC_012581.1"/>
</dbReference>
<dbReference type="SMR" id="C3LJ77"/>
<dbReference type="GeneID" id="93010948"/>
<dbReference type="KEGG" id="bah:BAMEG_0121"/>
<dbReference type="HOGENOM" id="CLU_104295_1_2_9"/>
<dbReference type="GO" id="GO:0015935">
    <property type="term" value="C:small ribosomal subunit"/>
    <property type="evidence" value="ECO:0007669"/>
    <property type="project" value="InterPro"/>
</dbReference>
<dbReference type="GO" id="GO:0019843">
    <property type="term" value="F:rRNA binding"/>
    <property type="evidence" value="ECO:0007669"/>
    <property type="project" value="UniProtKB-UniRule"/>
</dbReference>
<dbReference type="GO" id="GO:0003735">
    <property type="term" value="F:structural constituent of ribosome"/>
    <property type="evidence" value="ECO:0007669"/>
    <property type="project" value="InterPro"/>
</dbReference>
<dbReference type="GO" id="GO:0000049">
    <property type="term" value="F:tRNA binding"/>
    <property type="evidence" value="ECO:0007669"/>
    <property type="project" value="UniProtKB-UniRule"/>
</dbReference>
<dbReference type="GO" id="GO:0006412">
    <property type="term" value="P:translation"/>
    <property type="evidence" value="ECO:0007669"/>
    <property type="project" value="UniProtKB-UniRule"/>
</dbReference>
<dbReference type="CDD" id="cd03368">
    <property type="entry name" value="Ribosomal_S12"/>
    <property type="match status" value="1"/>
</dbReference>
<dbReference type="FunFam" id="2.40.50.140:FF:000001">
    <property type="entry name" value="30S ribosomal protein S12"/>
    <property type="match status" value="1"/>
</dbReference>
<dbReference type="Gene3D" id="2.40.50.140">
    <property type="entry name" value="Nucleic acid-binding proteins"/>
    <property type="match status" value="1"/>
</dbReference>
<dbReference type="HAMAP" id="MF_00403_B">
    <property type="entry name" value="Ribosomal_uS12_B"/>
    <property type="match status" value="1"/>
</dbReference>
<dbReference type="InterPro" id="IPR012340">
    <property type="entry name" value="NA-bd_OB-fold"/>
</dbReference>
<dbReference type="InterPro" id="IPR006032">
    <property type="entry name" value="Ribosomal_uS12"/>
</dbReference>
<dbReference type="InterPro" id="IPR005679">
    <property type="entry name" value="Ribosomal_uS12_bac"/>
</dbReference>
<dbReference type="NCBIfam" id="TIGR00981">
    <property type="entry name" value="rpsL_bact"/>
    <property type="match status" value="1"/>
</dbReference>
<dbReference type="PANTHER" id="PTHR11652">
    <property type="entry name" value="30S RIBOSOMAL PROTEIN S12 FAMILY MEMBER"/>
    <property type="match status" value="1"/>
</dbReference>
<dbReference type="Pfam" id="PF00164">
    <property type="entry name" value="Ribosom_S12_S23"/>
    <property type="match status" value="1"/>
</dbReference>
<dbReference type="PRINTS" id="PR01034">
    <property type="entry name" value="RIBOSOMALS12"/>
</dbReference>
<dbReference type="SUPFAM" id="SSF50249">
    <property type="entry name" value="Nucleic acid-binding proteins"/>
    <property type="match status" value="1"/>
</dbReference>
<dbReference type="PROSITE" id="PS00055">
    <property type="entry name" value="RIBOSOMAL_S12"/>
    <property type="match status" value="1"/>
</dbReference>
<protein>
    <recommendedName>
        <fullName evidence="2">Small ribosomal subunit protein uS12</fullName>
    </recommendedName>
    <alternativeName>
        <fullName evidence="3">30S ribosomal protein S12</fullName>
    </alternativeName>
</protein>
<reference key="1">
    <citation type="submission" date="2008-10" db="EMBL/GenBank/DDBJ databases">
        <title>Genome sequence of Bacillus anthracis str. CDC 684.</title>
        <authorList>
            <person name="Dodson R.J."/>
            <person name="Munk A.C."/>
            <person name="Brettin T."/>
            <person name="Bruce D."/>
            <person name="Detter C."/>
            <person name="Tapia R."/>
            <person name="Han C."/>
            <person name="Sutton G."/>
            <person name="Sims D."/>
        </authorList>
    </citation>
    <scope>NUCLEOTIDE SEQUENCE [LARGE SCALE GENOMIC DNA]</scope>
    <source>
        <strain>CDC 684 / NRRL 3495</strain>
    </source>
</reference>
<keyword id="KW-0488">Methylation</keyword>
<keyword id="KW-0687">Ribonucleoprotein</keyword>
<keyword id="KW-0689">Ribosomal protein</keyword>
<keyword id="KW-0694">RNA-binding</keyword>
<keyword id="KW-0699">rRNA-binding</keyword>
<keyword id="KW-0820">tRNA-binding</keyword>
<gene>
    <name evidence="2" type="primary">rpsL</name>
    <name type="ordered locus">BAMEG_0121</name>
</gene>